<dbReference type="EMBL" id="AP009368">
    <property type="protein sequence ID" value="BAF49953.1"/>
    <property type="molecule type" value="Genomic_DNA"/>
</dbReference>
<dbReference type="RefSeq" id="YP_001123129.1">
    <property type="nucleotide sequence ID" value="NC_009267.1"/>
</dbReference>
<dbReference type="SMR" id="A4QJZ8"/>
<dbReference type="GeneID" id="4962402"/>
<dbReference type="GO" id="GO:0009535">
    <property type="term" value="C:chloroplast thylakoid membrane"/>
    <property type="evidence" value="ECO:0007669"/>
    <property type="project" value="UniProtKB-SubCell"/>
</dbReference>
<dbReference type="GO" id="GO:0009539">
    <property type="term" value="C:photosystem II reaction center"/>
    <property type="evidence" value="ECO:0007669"/>
    <property type="project" value="InterPro"/>
</dbReference>
<dbReference type="GO" id="GO:0015979">
    <property type="term" value="P:photosynthesis"/>
    <property type="evidence" value="ECO:0007669"/>
    <property type="project" value="UniProtKB-UniRule"/>
</dbReference>
<dbReference type="Gene3D" id="6.10.250.2070">
    <property type="match status" value="1"/>
</dbReference>
<dbReference type="HAMAP" id="MF_01305">
    <property type="entry name" value="PSII_PsbJ"/>
    <property type="match status" value="1"/>
</dbReference>
<dbReference type="InterPro" id="IPR002682">
    <property type="entry name" value="PSII_PsbJ"/>
</dbReference>
<dbReference type="InterPro" id="IPR037267">
    <property type="entry name" value="PSII_PsbJ_sf"/>
</dbReference>
<dbReference type="NCBIfam" id="NF002722">
    <property type="entry name" value="PRK02565.1"/>
    <property type="match status" value="1"/>
</dbReference>
<dbReference type="PANTHER" id="PTHR34812">
    <property type="entry name" value="PHOTOSYSTEM II REACTION CENTER PROTEIN J"/>
    <property type="match status" value="1"/>
</dbReference>
<dbReference type="PANTHER" id="PTHR34812:SF3">
    <property type="entry name" value="PHOTOSYSTEM II REACTION CENTER PROTEIN J"/>
    <property type="match status" value="1"/>
</dbReference>
<dbReference type="Pfam" id="PF01788">
    <property type="entry name" value="PsbJ"/>
    <property type="match status" value="1"/>
</dbReference>
<dbReference type="SUPFAM" id="SSF161021">
    <property type="entry name" value="Photosystem II reaction center protein J, PsbJ"/>
    <property type="match status" value="1"/>
</dbReference>
<accession>A4QJZ8</accession>
<keyword id="KW-0150">Chloroplast</keyword>
<keyword id="KW-0472">Membrane</keyword>
<keyword id="KW-0602">Photosynthesis</keyword>
<keyword id="KW-0604">Photosystem II</keyword>
<keyword id="KW-0934">Plastid</keyword>
<keyword id="KW-0674">Reaction center</keyword>
<keyword id="KW-0793">Thylakoid</keyword>
<keyword id="KW-0812">Transmembrane</keyword>
<keyword id="KW-1133">Transmembrane helix</keyword>
<sequence length="40" mass="4101">MADTTGRIPLWVIGTVAGIPVIGLIGIFFYGSYSGLGSSL</sequence>
<protein>
    <recommendedName>
        <fullName evidence="1">Photosystem II reaction center protein J</fullName>
        <shortName evidence="1">PSII-J</shortName>
    </recommendedName>
</protein>
<evidence type="ECO:0000255" key="1">
    <source>
        <dbReference type="HAMAP-Rule" id="MF_01305"/>
    </source>
</evidence>
<comment type="function">
    <text evidence="1">One of the components of the core complex of photosystem II (PSII). PSII is a light-driven water:plastoquinone oxidoreductase that uses light energy to abstract electrons from H(2)O, generating O(2) and a proton gradient subsequently used for ATP formation. It consists of a core antenna complex that captures photons, and an electron transfer chain that converts photonic excitation into a charge separation.</text>
</comment>
<comment type="subunit">
    <text evidence="1">PSII is composed of 1 copy each of membrane proteins PsbA, PsbB, PsbC, PsbD, PsbE, PsbF, PsbH, PsbI, PsbJ, PsbK, PsbL, PsbM, PsbT, PsbX, PsbY, PsbZ, Psb30/Ycf12, at least 3 peripheral proteins of the oxygen-evolving complex and a large number of cofactors. It forms dimeric complexes.</text>
</comment>
<comment type="subcellular location">
    <subcellularLocation>
        <location evidence="1">Plastid</location>
        <location evidence="1">Chloroplast thylakoid membrane</location>
        <topology evidence="1">Single-pass membrane protein</topology>
    </subcellularLocation>
</comment>
<comment type="similarity">
    <text evidence="1">Belongs to the PsbJ family.</text>
</comment>
<feature type="chain" id="PRO_0000292257" description="Photosystem II reaction center protein J">
    <location>
        <begin position="1"/>
        <end position="40"/>
    </location>
</feature>
<feature type="transmembrane region" description="Helical" evidence="1">
    <location>
        <begin position="8"/>
        <end position="28"/>
    </location>
</feature>
<proteinExistence type="inferred from homology"/>
<name>PSBJ_OLIPU</name>
<gene>
    <name evidence="1" type="primary">psbJ</name>
</gene>
<organism>
    <name type="scientific">Olimarabidopsis pumila</name>
    <name type="common">Dwarf rocket</name>
    <name type="synonym">Arabidopsis griffithiana</name>
    <dbReference type="NCBI Taxonomy" id="74718"/>
    <lineage>
        <taxon>Eukaryota</taxon>
        <taxon>Viridiplantae</taxon>
        <taxon>Streptophyta</taxon>
        <taxon>Embryophyta</taxon>
        <taxon>Tracheophyta</taxon>
        <taxon>Spermatophyta</taxon>
        <taxon>Magnoliopsida</taxon>
        <taxon>eudicotyledons</taxon>
        <taxon>Gunneridae</taxon>
        <taxon>Pentapetalae</taxon>
        <taxon>rosids</taxon>
        <taxon>malvids</taxon>
        <taxon>Brassicales</taxon>
        <taxon>Brassicaceae</taxon>
        <taxon>Alyssopsideae</taxon>
        <taxon>Olimarabidopsis</taxon>
    </lineage>
</organism>
<reference key="1">
    <citation type="submission" date="2007-03" db="EMBL/GenBank/DDBJ databases">
        <title>Sequence analysis of Arabidopsis pumila JS2 chloroplast DNA.</title>
        <authorList>
            <person name="Hosouchi T."/>
            <person name="Tsuruoka H."/>
            <person name="Kotani H."/>
        </authorList>
    </citation>
    <scope>NUCLEOTIDE SEQUENCE [LARGE SCALE GENOMIC DNA]</scope>
</reference>
<geneLocation type="chloroplast"/>